<evidence type="ECO:0000255" key="1">
    <source>
        <dbReference type="HAMAP-Rule" id="MF_01358"/>
    </source>
</evidence>
<feature type="chain" id="PRO_0000357785" description="NADH-quinone oxidoreductase subunit D">
    <location>
        <begin position="1"/>
        <end position="396"/>
    </location>
</feature>
<organism>
    <name type="scientific">Brucella canis (strain ATCC 23365 / NCTC 10854 / RM-666)</name>
    <dbReference type="NCBI Taxonomy" id="483179"/>
    <lineage>
        <taxon>Bacteria</taxon>
        <taxon>Pseudomonadati</taxon>
        <taxon>Pseudomonadota</taxon>
        <taxon>Alphaproteobacteria</taxon>
        <taxon>Hyphomicrobiales</taxon>
        <taxon>Brucellaceae</taxon>
        <taxon>Brucella/Ochrobactrum group</taxon>
        <taxon>Brucella</taxon>
    </lineage>
</organism>
<dbReference type="EC" id="7.1.1.-" evidence="1"/>
<dbReference type="EMBL" id="CP000872">
    <property type="protein sequence ID" value="ABX61885.1"/>
    <property type="molecule type" value="Genomic_DNA"/>
</dbReference>
<dbReference type="RefSeq" id="WP_002963940.1">
    <property type="nucleotide sequence ID" value="NC_010103.1"/>
</dbReference>
<dbReference type="SMR" id="A9MAI2"/>
<dbReference type="KEGG" id="bcs:BCAN_A0820"/>
<dbReference type="HOGENOM" id="CLU_015134_1_1_5"/>
<dbReference type="PhylomeDB" id="A9MAI2"/>
<dbReference type="Proteomes" id="UP000001385">
    <property type="component" value="Chromosome I"/>
</dbReference>
<dbReference type="GO" id="GO:0005886">
    <property type="term" value="C:plasma membrane"/>
    <property type="evidence" value="ECO:0007669"/>
    <property type="project" value="UniProtKB-SubCell"/>
</dbReference>
<dbReference type="GO" id="GO:0051287">
    <property type="term" value="F:NAD binding"/>
    <property type="evidence" value="ECO:0007669"/>
    <property type="project" value="InterPro"/>
</dbReference>
<dbReference type="GO" id="GO:0050136">
    <property type="term" value="F:NADH:ubiquinone reductase (non-electrogenic) activity"/>
    <property type="evidence" value="ECO:0007669"/>
    <property type="project" value="UniProtKB-UniRule"/>
</dbReference>
<dbReference type="GO" id="GO:0048038">
    <property type="term" value="F:quinone binding"/>
    <property type="evidence" value="ECO:0007669"/>
    <property type="project" value="UniProtKB-KW"/>
</dbReference>
<dbReference type="FunFam" id="1.10.645.10:FF:000005">
    <property type="entry name" value="NADH-quinone oxidoreductase subunit D"/>
    <property type="match status" value="1"/>
</dbReference>
<dbReference type="Gene3D" id="1.10.645.10">
    <property type="entry name" value="Cytochrome-c3 Hydrogenase, chain B"/>
    <property type="match status" value="1"/>
</dbReference>
<dbReference type="HAMAP" id="MF_01358">
    <property type="entry name" value="NDH1_NuoD"/>
    <property type="match status" value="1"/>
</dbReference>
<dbReference type="InterPro" id="IPR001135">
    <property type="entry name" value="NADH_Q_OxRdtase_suD"/>
</dbReference>
<dbReference type="InterPro" id="IPR014029">
    <property type="entry name" value="NADH_UbQ_OxRdtase_49kDa_CS"/>
</dbReference>
<dbReference type="InterPro" id="IPR022885">
    <property type="entry name" value="NDH1_su_D/H"/>
</dbReference>
<dbReference type="InterPro" id="IPR029014">
    <property type="entry name" value="NiFe-Hase_large"/>
</dbReference>
<dbReference type="NCBIfam" id="TIGR01962">
    <property type="entry name" value="NuoD"/>
    <property type="match status" value="1"/>
</dbReference>
<dbReference type="NCBIfam" id="NF004739">
    <property type="entry name" value="PRK06075.1"/>
    <property type="match status" value="1"/>
</dbReference>
<dbReference type="PANTHER" id="PTHR11993:SF10">
    <property type="entry name" value="NADH DEHYDROGENASE [UBIQUINONE] IRON-SULFUR PROTEIN 2, MITOCHONDRIAL"/>
    <property type="match status" value="1"/>
</dbReference>
<dbReference type="PANTHER" id="PTHR11993">
    <property type="entry name" value="NADH-UBIQUINONE OXIDOREDUCTASE 49 KDA SUBUNIT"/>
    <property type="match status" value="1"/>
</dbReference>
<dbReference type="Pfam" id="PF00346">
    <property type="entry name" value="Complex1_49kDa"/>
    <property type="match status" value="1"/>
</dbReference>
<dbReference type="SUPFAM" id="SSF56762">
    <property type="entry name" value="HydB/Nqo4-like"/>
    <property type="match status" value="1"/>
</dbReference>
<dbReference type="PROSITE" id="PS00535">
    <property type="entry name" value="COMPLEX1_49K"/>
    <property type="match status" value="1"/>
</dbReference>
<comment type="function">
    <text evidence="1">NDH-1 shuttles electrons from NADH, via FMN and iron-sulfur (Fe-S) centers, to quinones in the respiratory chain. The immediate electron acceptor for the enzyme in this species is believed to be ubiquinone. Couples the redox reaction to proton translocation (for every two electrons transferred, four hydrogen ions are translocated across the cytoplasmic membrane), and thus conserves the redox energy in a proton gradient.</text>
</comment>
<comment type="catalytic activity">
    <reaction evidence="1">
        <text>a quinone + NADH + 5 H(+)(in) = a quinol + NAD(+) + 4 H(+)(out)</text>
        <dbReference type="Rhea" id="RHEA:57888"/>
        <dbReference type="ChEBI" id="CHEBI:15378"/>
        <dbReference type="ChEBI" id="CHEBI:24646"/>
        <dbReference type="ChEBI" id="CHEBI:57540"/>
        <dbReference type="ChEBI" id="CHEBI:57945"/>
        <dbReference type="ChEBI" id="CHEBI:132124"/>
    </reaction>
</comment>
<comment type="subunit">
    <text evidence="1">NDH-1 is composed of 14 different subunits. Subunits NuoB, C, D, E, F, and G constitute the peripheral sector of the complex.</text>
</comment>
<comment type="subcellular location">
    <subcellularLocation>
        <location evidence="1">Cell inner membrane</location>
        <topology evidence="1">Peripheral membrane protein</topology>
        <orientation evidence="1">Cytoplasmic side</orientation>
    </subcellularLocation>
</comment>
<comment type="similarity">
    <text evidence="1">Belongs to the complex I 49 kDa subunit family.</text>
</comment>
<accession>A9MAI2</accession>
<keyword id="KW-0997">Cell inner membrane</keyword>
<keyword id="KW-1003">Cell membrane</keyword>
<keyword id="KW-0472">Membrane</keyword>
<keyword id="KW-0520">NAD</keyword>
<keyword id="KW-0874">Quinone</keyword>
<keyword id="KW-1185">Reference proteome</keyword>
<keyword id="KW-1278">Translocase</keyword>
<keyword id="KW-0813">Transport</keyword>
<keyword id="KW-0830">Ubiquinone</keyword>
<reference key="1">
    <citation type="submission" date="2007-10" db="EMBL/GenBank/DDBJ databases">
        <title>Brucella canis ATCC 23365 whole genome shotgun sequencing project.</title>
        <authorList>
            <person name="Setubal J.C."/>
            <person name="Bowns C."/>
            <person name="Boyle S."/>
            <person name="Crasta O.R."/>
            <person name="Czar M.J."/>
            <person name="Dharmanolla C."/>
            <person name="Gillespie J.J."/>
            <person name="Kenyon R.W."/>
            <person name="Lu J."/>
            <person name="Mane S."/>
            <person name="Mohapatra S."/>
            <person name="Nagrani S."/>
            <person name="Purkayastha A."/>
            <person name="Rajasimha H.K."/>
            <person name="Shallom J.M."/>
            <person name="Shallom S."/>
            <person name="Shukla M."/>
            <person name="Snyder E.E."/>
            <person name="Sobral B.W."/>
            <person name="Wattam A.R."/>
            <person name="Will R."/>
            <person name="Williams K."/>
            <person name="Yoo H."/>
            <person name="Bruce D."/>
            <person name="Detter C."/>
            <person name="Munk C."/>
            <person name="Brettin T.S."/>
        </authorList>
    </citation>
    <scope>NUCLEOTIDE SEQUENCE [LARGE SCALE GENOMIC DNA]</scope>
    <source>
        <strain>ATCC 23365 / NCTC 10854 / RM-666</strain>
    </source>
</reference>
<name>NUOD_BRUC2</name>
<gene>
    <name evidence="1" type="primary">nuoD</name>
    <name type="ordered locus">BCAN_A0820</name>
</gene>
<proteinExistence type="inferred from homology"/>
<protein>
    <recommendedName>
        <fullName evidence="1">NADH-quinone oxidoreductase subunit D</fullName>
        <ecNumber evidence="1">7.1.1.-</ecNumber>
    </recommendedName>
    <alternativeName>
        <fullName evidence="1">NADH dehydrogenase I subunit D</fullName>
    </alternativeName>
    <alternativeName>
        <fullName evidence="1">NDH-1 subunit D</fullName>
    </alternativeName>
</protein>
<sequence>MAETQVRNFNINFGPQHPAAHGVLRLVLELDGEVVERVDPHIGLLHRGTEKLMEAKTYLQAVPYLDRLDYVAPMNQEHAYALAVERLLDIEVPKRGQLIRVLYSEIGRILNHLLNVTTQAMDVGALTPPLWGFEEREKLMVFYERACGARMHAAYFRPGGVHQDLPDQLIEDIGKWIDPFFTTLKNLDDLITPNRIFKQRNVDIGVVKLEDAWAWGFSGVMVRGSGAAWDLRKSQPYECYSEMEFDIPVGKNGDCYDRYLIRMEEMRQSARIMRQCVDLLLGKERVGPVSNTDHKIVPPKRGEMKRSMEALIHHFKLYTEGYHVPAGEVYAAVEAPKGEFGVYLVSDGSNKPYRCKLRAPGFAHLQAMDFLCRGHMLADVSAILGSLDIVFGEVDR</sequence>